<feature type="chain" id="PRO_1000050985" description="Putative 3-methyladenine DNA glycosylase">
    <location>
        <begin position="1"/>
        <end position="203"/>
    </location>
</feature>
<dbReference type="EC" id="3.2.2.-" evidence="1"/>
<dbReference type="EMBL" id="CP000726">
    <property type="protein sequence ID" value="ABS34107.1"/>
    <property type="molecule type" value="Genomic_DNA"/>
</dbReference>
<dbReference type="RefSeq" id="WP_003356430.1">
    <property type="nucleotide sequence ID" value="NC_009697.1"/>
</dbReference>
<dbReference type="SMR" id="A7FTE3"/>
<dbReference type="KEGG" id="cba:CLB_1293"/>
<dbReference type="HOGENOM" id="CLU_060471_0_2_9"/>
<dbReference type="GO" id="GO:0003905">
    <property type="term" value="F:alkylbase DNA N-glycosylase activity"/>
    <property type="evidence" value="ECO:0007669"/>
    <property type="project" value="InterPro"/>
</dbReference>
<dbReference type="GO" id="GO:0003677">
    <property type="term" value="F:DNA binding"/>
    <property type="evidence" value="ECO:0007669"/>
    <property type="project" value="InterPro"/>
</dbReference>
<dbReference type="GO" id="GO:0006284">
    <property type="term" value="P:base-excision repair"/>
    <property type="evidence" value="ECO:0007669"/>
    <property type="project" value="InterPro"/>
</dbReference>
<dbReference type="CDD" id="cd00540">
    <property type="entry name" value="AAG"/>
    <property type="match status" value="1"/>
</dbReference>
<dbReference type="FunFam" id="3.10.300.10:FF:000001">
    <property type="entry name" value="Putative 3-methyladenine DNA glycosylase"/>
    <property type="match status" value="1"/>
</dbReference>
<dbReference type="Gene3D" id="3.10.300.10">
    <property type="entry name" value="Methylpurine-DNA glycosylase (MPG)"/>
    <property type="match status" value="1"/>
</dbReference>
<dbReference type="HAMAP" id="MF_00527">
    <property type="entry name" value="3MGH"/>
    <property type="match status" value="1"/>
</dbReference>
<dbReference type="InterPro" id="IPR011034">
    <property type="entry name" value="Formyl_transferase-like_C_sf"/>
</dbReference>
<dbReference type="InterPro" id="IPR003180">
    <property type="entry name" value="MPG"/>
</dbReference>
<dbReference type="InterPro" id="IPR036995">
    <property type="entry name" value="MPG_sf"/>
</dbReference>
<dbReference type="NCBIfam" id="TIGR00567">
    <property type="entry name" value="3mg"/>
    <property type="match status" value="1"/>
</dbReference>
<dbReference type="NCBIfam" id="NF002001">
    <property type="entry name" value="PRK00802.1-1"/>
    <property type="match status" value="1"/>
</dbReference>
<dbReference type="PANTHER" id="PTHR10429">
    <property type="entry name" value="DNA-3-METHYLADENINE GLYCOSYLASE"/>
    <property type="match status" value="1"/>
</dbReference>
<dbReference type="PANTHER" id="PTHR10429:SF0">
    <property type="entry name" value="DNA-3-METHYLADENINE GLYCOSYLASE"/>
    <property type="match status" value="1"/>
</dbReference>
<dbReference type="Pfam" id="PF02245">
    <property type="entry name" value="Pur_DNA_glyco"/>
    <property type="match status" value="1"/>
</dbReference>
<dbReference type="SUPFAM" id="SSF50486">
    <property type="entry name" value="FMT C-terminal domain-like"/>
    <property type="match status" value="1"/>
</dbReference>
<evidence type="ECO:0000255" key="1">
    <source>
        <dbReference type="HAMAP-Rule" id="MF_00527"/>
    </source>
</evidence>
<keyword id="KW-0227">DNA damage</keyword>
<keyword id="KW-0234">DNA repair</keyword>
<keyword id="KW-0378">Hydrolase</keyword>
<organism>
    <name type="scientific">Clostridium botulinum (strain ATCC 19397 / Type A)</name>
    <dbReference type="NCBI Taxonomy" id="441770"/>
    <lineage>
        <taxon>Bacteria</taxon>
        <taxon>Bacillati</taxon>
        <taxon>Bacillota</taxon>
        <taxon>Clostridia</taxon>
        <taxon>Eubacteriales</taxon>
        <taxon>Clostridiaceae</taxon>
        <taxon>Clostridium</taxon>
    </lineage>
</organism>
<reference key="1">
    <citation type="journal article" date="2007" name="PLoS ONE">
        <title>Analysis of the neurotoxin complex genes in Clostridium botulinum A1-A4 and B1 strains: BoNT/A3, /Ba4 and /B1 clusters are located within plasmids.</title>
        <authorList>
            <person name="Smith T.J."/>
            <person name="Hill K.K."/>
            <person name="Foley B.T."/>
            <person name="Detter J.C."/>
            <person name="Munk A.C."/>
            <person name="Bruce D.C."/>
            <person name="Doggett N.A."/>
            <person name="Smith L.A."/>
            <person name="Marks J.D."/>
            <person name="Xie G."/>
            <person name="Brettin T.S."/>
        </authorList>
    </citation>
    <scope>NUCLEOTIDE SEQUENCE [LARGE SCALE GENOMIC DNA]</scope>
    <source>
        <strain>ATCC 19397 / Type A</strain>
    </source>
</reference>
<proteinExistence type="inferred from homology"/>
<protein>
    <recommendedName>
        <fullName evidence="1">Putative 3-methyladenine DNA glycosylase</fullName>
        <ecNumber evidence="1">3.2.2.-</ecNumber>
    </recommendedName>
</protein>
<name>3MGH_CLOB1</name>
<sequence>MRLTRDFYAKDARVLAKELLGKVLVREVDGIKLKGKIVETEAYIGAIDKASHAYGGRRTKRTEPLYGKPGIAYVYFIYGKYFCFNIISKTEGEAEGVLIRALEPLENINLISKLRFNKEFEELNNYQRKNITSGPSKLCMAFNINRDNNWEDLCESSSLYVEDVFYNDFEIIETVRVGIDYAEEARDFLWRYYIKDNAFVSVK</sequence>
<comment type="similarity">
    <text evidence="1">Belongs to the DNA glycosylase MPG family.</text>
</comment>
<accession>A7FTE3</accession>
<gene>
    <name type="ordered locus">CLB_1293</name>
</gene>